<organism>
    <name type="scientific">Lactobacillus johnsonii (strain CNCM I-12250 / La1 / NCC 533)</name>
    <dbReference type="NCBI Taxonomy" id="257314"/>
    <lineage>
        <taxon>Bacteria</taxon>
        <taxon>Bacillati</taxon>
        <taxon>Bacillota</taxon>
        <taxon>Bacilli</taxon>
        <taxon>Lactobacillales</taxon>
        <taxon>Lactobacillaceae</taxon>
        <taxon>Lactobacillus</taxon>
    </lineage>
</organism>
<accession>P24022</accession>
<gene>
    <name type="primary">lafA</name>
    <name type="synonym">laf</name>
    <name type="ordered locus">LJ_0769</name>
</gene>
<dbReference type="EMBL" id="M57961">
    <property type="protein sequence ID" value="AAA16636.1"/>
    <property type="molecule type" value="Unassigned_DNA"/>
</dbReference>
<dbReference type="EMBL" id="AE017198">
    <property type="protein sequence ID" value="AAS08588.1"/>
    <property type="molecule type" value="Genomic_DNA"/>
</dbReference>
<dbReference type="RefSeq" id="WP_011161711.1">
    <property type="nucleotide sequence ID" value="NC_005362.1"/>
</dbReference>
<dbReference type="TCDB" id="1.C.26.1.1">
    <property type="family name" value="the lactacin x (lactacin x) family"/>
</dbReference>
<dbReference type="KEGG" id="ljo:LJ_0769"/>
<dbReference type="PATRIC" id="fig|257314.6.peg.625"/>
<dbReference type="eggNOG" id="ENOG50304YT">
    <property type="taxonomic scope" value="Bacteria"/>
</dbReference>
<dbReference type="HOGENOM" id="CLU_188490_0_0_9"/>
<dbReference type="Proteomes" id="UP000000581">
    <property type="component" value="Chromosome"/>
</dbReference>
<dbReference type="GO" id="GO:0042742">
    <property type="term" value="P:defense response to bacterium"/>
    <property type="evidence" value="ECO:0007669"/>
    <property type="project" value="UniProtKB-KW"/>
</dbReference>
<dbReference type="GO" id="GO:0031640">
    <property type="term" value="P:killing of cells of another organism"/>
    <property type="evidence" value="ECO:0007669"/>
    <property type="project" value="UniProtKB-KW"/>
</dbReference>
<dbReference type="InterPro" id="IPR019493">
    <property type="entry name" value="Bacteriocin_IIb_lactacin-rel"/>
</dbReference>
<dbReference type="Pfam" id="PF10439">
    <property type="entry name" value="Bacteriocin_IIc"/>
    <property type="match status" value="1"/>
</dbReference>
<proteinExistence type="evidence at protein level"/>
<feature type="propeptide" id="PRO_0000002753" evidence="1">
    <location>
        <begin position="1"/>
        <end position="18"/>
    </location>
</feature>
<feature type="chain" id="PRO_0000002754" description="Bacteriocin lactacin-F subunit LafA">
    <location>
        <begin position="19"/>
        <end position="75"/>
    </location>
</feature>
<feature type="sequence conflict" description="In Ref. 1; no nucleotide entry and 2; AAA16636." evidence="2" ref="1 2">
    <original>A</original>
    <variation>G</variation>
    <location>
        <position position="62"/>
    </location>
</feature>
<reference key="1">
    <citation type="journal article" date="1991" name="J. Bacteriol.">
        <title>Cloning, phenotypic expression, and DNA sequence of the gene for lactacin F, an antimicrobial peptide produced by Lactobacillus spp.</title>
        <authorList>
            <person name="Muriana P.M."/>
            <person name="Klaenhammer T.R."/>
        </authorList>
    </citation>
    <scope>NUCLEOTIDE SEQUENCE [GENOMIC DNA]</scope>
    <scope>PARTIAL PROTEIN SEQUENCE</scope>
    <source>
        <strain>ATCC 11506 / JCM 1101 / NBRC 13952 / NCIMB 8795 / R-26 / VPI 11088</strain>
    </source>
</reference>
<reference key="2">
    <citation type="journal article" date="1993" name="Appl. Environ. Microbiol.">
        <title>Molecular analysis of the lactacin F operon.</title>
        <authorList>
            <person name="Fremaux C."/>
            <person name="Ahn C."/>
            <person name="Klaenhammer T.R."/>
        </authorList>
    </citation>
    <scope>NUCLEOTIDE SEQUENCE [GENOMIC DNA]</scope>
    <source>
        <strain>ATCC 11506 / JCM 1101 / NBRC 13952 / NCIMB 8795 / R-26 / VPI 11088</strain>
    </source>
</reference>
<reference key="3">
    <citation type="journal article" date="2004" name="Proc. Natl. Acad. Sci. U.S.A.">
        <title>The genome sequence of the probiotic intestinal bacterium Lactobacillus johnsonii NCC 533.</title>
        <authorList>
            <person name="Pridmore R.D."/>
            <person name="Berger B."/>
            <person name="Desiere F."/>
            <person name="Vilanova D."/>
            <person name="Barretto C."/>
            <person name="Pittet A.-C."/>
            <person name="Zwahlen M.-C."/>
            <person name="Rouvet M."/>
            <person name="Altermann E."/>
            <person name="Barrangou R."/>
            <person name="Mollet B."/>
            <person name="Mercenier A."/>
            <person name="Klaenhammer T."/>
            <person name="Arigoni F."/>
            <person name="Schell M.A."/>
        </authorList>
    </citation>
    <scope>NUCLEOTIDE SEQUENCE [LARGE SCALE GENOMIC DNA]</scope>
    <source>
        <strain>CNCM I-1225 / La1 / NCC 533</strain>
    </source>
</reference>
<reference key="4">
    <citation type="journal article" date="1991" name="Appl. Environ. Microbiol.">
        <title>Purification and partial characterization of lactacin F, a bacteriocin produced by Lactobacillus acidophilus 11088.</title>
        <authorList>
            <person name="Muriana P.M."/>
            <person name="Klaenhammer T.R."/>
        </authorList>
    </citation>
    <scope>PROTEIN SEQUENCE OF 19-43</scope>
    <source>
        <strain>ATCC 11506 / JCM 1101 / NBRC 13952 / NCIMB 8795 / R-26 / VPI 11088</strain>
    </source>
</reference>
<comment type="function">
    <text>Heat stable bacteriocin active against Enterococcus faecalis and other Lactobacilli.</text>
</comment>
<comment type="subunit">
    <text>This bacteriocin depends upon the complementation of two peptides for activity: LafA and LafX. Associated with a 180 kDa bacteriocin complex.</text>
</comment>
<comment type="similarity">
    <text evidence="2">Belongs to the bacteriocin class IIB family.</text>
</comment>
<name>LAFA_LACJO</name>
<protein>
    <recommendedName>
        <fullName>Bacteriocin lactacin-F subunit LafA</fullName>
    </recommendedName>
</protein>
<keyword id="KW-0044">Antibiotic</keyword>
<keyword id="KW-0929">Antimicrobial</keyword>
<keyword id="KW-0078">Bacteriocin</keyword>
<keyword id="KW-0903">Direct protein sequencing</keyword>
<evidence type="ECO:0000269" key="1">
    <source>
    </source>
</evidence>
<evidence type="ECO:0000305" key="2"/>
<sequence>MKQFNYLSHKDLAVVVGGRNNWQTNVGGAVGSAMIGATVGGTICGPACAVAGAHYLPILWTAVTAATGGFGKIRK</sequence>